<sequence>MSGNTLGTLFTVTTFGESHGPAIGCVIDGCPPGMGLTEADIQFELDRRKPGTSRHVTQRQEADEVEILSGVFEGVTTGTPIALLIRNTDQRSKDYGNIVETFRPGHADYTYWQKYGIRDYRGGGRSSARLTAPIVGAGAVAKKWLRERFGVEVRGYMSCLGEVDVPFVDWSHVRENPFFSPNAAIVPELEAYMDALRKDGDSIGARIDVVASGVPVGWGEPVFDRLDADIAKAMMSINAVKGVEIGAGFDSVAQRGSVHGDELTPAGFVGNHAGGVLGGISTGQDITVSIAIKPTSSIRTPRRSITKAGEEATVETFGRHDPCVGIRATPIAESMLALVLIDHALRHRAQCGDVETSTPKIAGSAT</sequence>
<protein>
    <recommendedName>
        <fullName evidence="1">Chorismate synthase</fullName>
        <shortName evidence="1">CS</shortName>
        <ecNumber evidence="1">4.2.3.5</ecNumber>
    </recommendedName>
    <alternativeName>
        <fullName evidence="1">5-enolpyruvylshikimate-3-phosphate phospholyase</fullName>
    </alternativeName>
</protein>
<name>AROC_BURCM</name>
<organism>
    <name type="scientific">Burkholderia ambifaria (strain ATCC BAA-244 / DSM 16087 / CCUG 44356 / LMG 19182 / AMMD)</name>
    <name type="common">Burkholderia cepacia (strain AMMD)</name>
    <dbReference type="NCBI Taxonomy" id="339670"/>
    <lineage>
        <taxon>Bacteria</taxon>
        <taxon>Pseudomonadati</taxon>
        <taxon>Pseudomonadota</taxon>
        <taxon>Betaproteobacteria</taxon>
        <taxon>Burkholderiales</taxon>
        <taxon>Burkholderiaceae</taxon>
        <taxon>Burkholderia</taxon>
        <taxon>Burkholderia cepacia complex</taxon>
    </lineage>
</organism>
<comment type="function">
    <text evidence="1">Catalyzes the anti-1,4-elimination of the C-3 phosphate and the C-6 proR hydrogen from 5-enolpyruvylshikimate-3-phosphate (EPSP) to yield chorismate, which is the branch point compound that serves as the starting substrate for the three terminal pathways of aromatic amino acid biosynthesis. This reaction introduces a second double bond into the aromatic ring system.</text>
</comment>
<comment type="catalytic activity">
    <reaction evidence="1">
        <text>5-O-(1-carboxyvinyl)-3-phosphoshikimate = chorismate + phosphate</text>
        <dbReference type="Rhea" id="RHEA:21020"/>
        <dbReference type="ChEBI" id="CHEBI:29748"/>
        <dbReference type="ChEBI" id="CHEBI:43474"/>
        <dbReference type="ChEBI" id="CHEBI:57701"/>
        <dbReference type="EC" id="4.2.3.5"/>
    </reaction>
</comment>
<comment type="cofactor">
    <cofactor evidence="1">
        <name>FMNH2</name>
        <dbReference type="ChEBI" id="CHEBI:57618"/>
    </cofactor>
    <text evidence="1">Reduced FMN (FMNH(2)).</text>
</comment>
<comment type="pathway">
    <text evidence="1">Metabolic intermediate biosynthesis; chorismate biosynthesis; chorismate from D-erythrose 4-phosphate and phosphoenolpyruvate: step 7/7.</text>
</comment>
<comment type="subunit">
    <text evidence="1">Homotetramer.</text>
</comment>
<comment type="similarity">
    <text evidence="1">Belongs to the chorismate synthase family.</text>
</comment>
<evidence type="ECO:0000255" key="1">
    <source>
        <dbReference type="HAMAP-Rule" id="MF_00300"/>
    </source>
</evidence>
<reference key="1">
    <citation type="submission" date="2006-08" db="EMBL/GenBank/DDBJ databases">
        <title>Complete sequence of chromosome 1 of Burkholderia cepacia AMMD.</title>
        <authorList>
            <person name="Copeland A."/>
            <person name="Lucas S."/>
            <person name="Lapidus A."/>
            <person name="Barry K."/>
            <person name="Detter J.C."/>
            <person name="Glavina del Rio T."/>
            <person name="Hammon N."/>
            <person name="Israni S."/>
            <person name="Pitluck S."/>
            <person name="Bruce D."/>
            <person name="Chain P."/>
            <person name="Malfatti S."/>
            <person name="Shin M."/>
            <person name="Vergez L."/>
            <person name="Schmutz J."/>
            <person name="Larimer F."/>
            <person name="Land M."/>
            <person name="Hauser L."/>
            <person name="Kyrpides N."/>
            <person name="Kim E."/>
            <person name="Parke J."/>
            <person name="Coenye T."/>
            <person name="Konstantinidis K."/>
            <person name="Ramette A."/>
            <person name="Tiedje J."/>
            <person name="Richardson P."/>
        </authorList>
    </citation>
    <scope>NUCLEOTIDE SEQUENCE [LARGE SCALE GENOMIC DNA]</scope>
    <source>
        <strain>ATCC BAA-244 / DSM 16087 / CCUG 44356 / LMG 19182 / AMMD</strain>
    </source>
</reference>
<accession>Q0BG24</accession>
<keyword id="KW-0028">Amino-acid biosynthesis</keyword>
<keyword id="KW-0057">Aromatic amino acid biosynthesis</keyword>
<keyword id="KW-0274">FAD</keyword>
<keyword id="KW-0285">Flavoprotein</keyword>
<keyword id="KW-0288">FMN</keyword>
<keyword id="KW-0456">Lyase</keyword>
<keyword id="KW-0521">NADP</keyword>
<dbReference type="EC" id="4.2.3.5" evidence="1"/>
<dbReference type="EMBL" id="CP000440">
    <property type="protein sequence ID" value="ABI86899.1"/>
    <property type="molecule type" value="Genomic_DNA"/>
</dbReference>
<dbReference type="RefSeq" id="WP_011656657.1">
    <property type="nucleotide sequence ID" value="NC_008390.1"/>
</dbReference>
<dbReference type="SMR" id="Q0BG24"/>
<dbReference type="GeneID" id="93083259"/>
<dbReference type="KEGG" id="bam:Bamb_1341"/>
<dbReference type="PATRIC" id="fig|339670.21.peg.205"/>
<dbReference type="eggNOG" id="COG0082">
    <property type="taxonomic scope" value="Bacteria"/>
</dbReference>
<dbReference type="UniPathway" id="UPA00053">
    <property type="reaction ID" value="UER00090"/>
</dbReference>
<dbReference type="Proteomes" id="UP000000662">
    <property type="component" value="Chromosome 1"/>
</dbReference>
<dbReference type="GO" id="GO:0005829">
    <property type="term" value="C:cytosol"/>
    <property type="evidence" value="ECO:0007669"/>
    <property type="project" value="TreeGrafter"/>
</dbReference>
<dbReference type="GO" id="GO:0004107">
    <property type="term" value="F:chorismate synthase activity"/>
    <property type="evidence" value="ECO:0007669"/>
    <property type="project" value="UniProtKB-UniRule"/>
</dbReference>
<dbReference type="GO" id="GO:0010181">
    <property type="term" value="F:FMN binding"/>
    <property type="evidence" value="ECO:0007669"/>
    <property type="project" value="TreeGrafter"/>
</dbReference>
<dbReference type="GO" id="GO:0008652">
    <property type="term" value="P:amino acid biosynthetic process"/>
    <property type="evidence" value="ECO:0007669"/>
    <property type="project" value="UniProtKB-KW"/>
</dbReference>
<dbReference type="GO" id="GO:0009073">
    <property type="term" value="P:aromatic amino acid family biosynthetic process"/>
    <property type="evidence" value="ECO:0007669"/>
    <property type="project" value="UniProtKB-KW"/>
</dbReference>
<dbReference type="GO" id="GO:0009423">
    <property type="term" value="P:chorismate biosynthetic process"/>
    <property type="evidence" value="ECO:0007669"/>
    <property type="project" value="UniProtKB-UniRule"/>
</dbReference>
<dbReference type="CDD" id="cd07304">
    <property type="entry name" value="Chorismate_synthase"/>
    <property type="match status" value="1"/>
</dbReference>
<dbReference type="FunFam" id="3.60.150.10:FF:000001">
    <property type="entry name" value="Chorismate synthase"/>
    <property type="match status" value="1"/>
</dbReference>
<dbReference type="Gene3D" id="3.60.150.10">
    <property type="entry name" value="Chorismate synthase AroC"/>
    <property type="match status" value="1"/>
</dbReference>
<dbReference type="HAMAP" id="MF_00300">
    <property type="entry name" value="Chorismate_synth"/>
    <property type="match status" value="1"/>
</dbReference>
<dbReference type="InterPro" id="IPR000453">
    <property type="entry name" value="Chorismate_synth"/>
</dbReference>
<dbReference type="InterPro" id="IPR035904">
    <property type="entry name" value="Chorismate_synth_AroC_sf"/>
</dbReference>
<dbReference type="InterPro" id="IPR020541">
    <property type="entry name" value="Chorismate_synthase_CS"/>
</dbReference>
<dbReference type="NCBIfam" id="TIGR00033">
    <property type="entry name" value="aroC"/>
    <property type="match status" value="1"/>
</dbReference>
<dbReference type="NCBIfam" id="NF003793">
    <property type="entry name" value="PRK05382.1"/>
    <property type="match status" value="1"/>
</dbReference>
<dbReference type="PANTHER" id="PTHR21085">
    <property type="entry name" value="CHORISMATE SYNTHASE"/>
    <property type="match status" value="1"/>
</dbReference>
<dbReference type="PANTHER" id="PTHR21085:SF0">
    <property type="entry name" value="CHORISMATE SYNTHASE"/>
    <property type="match status" value="1"/>
</dbReference>
<dbReference type="Pfam" id="PF01264">
    <property type="entry name" value="Chorismate_synt"/>
    <property type="match status" value="1"/>
</dbReference>
<dbReference type="PIRSF" id="PIRSF001456">
    <property type="entry name" value="Chorismate_synth"/>
    <property type="match status" value="1"/>
</dbReference>
<dbReference type="SUPFAM" id="SSF103263">
    <property type="entry name" value="Chorismate synthase, AroC"/>
    <property type="match status" value="1"/>
</dbReference>
<dbReference type="PROSITE" id="PS00787">
    <property type="entry name" value="CHORISMATE_SYNTHASE_1"/>
    <property type="match status" value="1"/>
</dbReference>
<dbReference type="PROSITE" id="PS00788">
    <property type="entry name" value="CHORISMATE_SYNTHASE_2"/>
    <property type="match status" value="1"/>
</dbReference>
<dbReference type="PROSITE" id="PS00789">
    <property type="entry name" value="CHORISMATE_SYNTHASE_3"/>
    <property type="match status" value="1"/>
</dbReference>
<proteinExistence type="inferred from homology"/>
<gene>
    <name evidence="1" type="primary">aroC</name>
    <name type="ordered locus">Bamb_1341</name>
</gene>
<feature type="chain" id="PRO_1000022467" description="Chorismate synthase">
    <location>
        <begin position="1"/>
        <end position="366"/>
    </location>
</feature>
<feature type="binding site" evidence="1">
    <location>
        <position position="48"/>
    </location>
    <ligand>
        <name>NADP(+)</name>
        <dbReference type="ChEBI" id="CHEBI:58349"/>
    </ligand>
</feature>
<feature type="binding site" evidence="1">
    <location>
        <position position="54"/>
    </location>
    <ligand>
        <name>NADP(+)</name>
        <dbReference type="ChEBI" id="CHEBI:58349"/>
    </ligand>
</feature>
<feature type="binding site" evidence="1">
    <location>
        <begin position="125"/>
        <end position="127"/>
    </location>
    <ligand>
        <name>FMN</name>
        <dbReference type="ChEBI" id="CHEBI:58210"/>
    </ligand>
</feature>
<feature type="binding site" evidence="1">
    <location>
        <begin position="238"/>
        <end position="239"/>
    </location>
    <ligand>
        <name>FMN</name>
        <dbReference type="ChEBI" id="CHEBI:58210"/>
    </ligand>
</feature>
<feature type="binding site" evidence="1">
    <location>
        <position position="278"/>
    </location>
    <ligand>
        <name>FMN</name>
        <dbReference type="ChEBI" id="CHEBI:58210"/>
    </ligand>
</feature>
<feature type="binding site" evidence="1">
    <location>
        <begin position="293"/>
        <end position="297"/>
    </location>
    <ligand>
        <name>FMN</name>
        <dbReference type="ChEBI" id="CHEBI:58210"/>
    </ligand>
</feature>
<feature type="binding site" evidence="1">
    <location>
        <position position="319"/>
    </location>
    <ligand>
        <name>FMN</name>
        <dbReference type="ChEBI" id="CHEBI:58210"/>
    </ligand>
</feature>